<gene>
    <name evidence="1" type="primary">rpsM</name>
    <name type="ordered locus">MXAN_3323</name>
</gene>
<name>RS13_MYXXD</name>
<feature type="chain" id="PRO_0000306658" description="Small ribosomal subunit protein uS13">
    <location>
        <begin position="1"/>
        <end position="127"/>
    </location>
</feature>
<feature type="region of interest" description="Disordered" evidence="2">
    <location>
        <begin position="96"/>
        <end position="127"/>
    </location>
</feature>
<feature type="compositionally biased region" description="Basic residues" evidence="2">
    <location>
        <begin position="96"/>
        <end position="118"/>
    </location>
</feature>
<evidence type="ECO:0000255" key="1">
    <source>
        <dbReference type="HAMAP-Rule" id="MF_01315"/>
    </source>
</evidence>
<evidence type="ECO:0000256" key="2">
    <source>
        <dbReference type="SAM" id="MobiDB-lite"/>
    </source>
</evidence>
<evidence type="ECO:0000305" key="3"/>
<organism>
    <name type="scientific">Myxococcus xanthus (strain DK1622)</name>
    <dbReference type="NCBI Taxonomy" id="246197"/>
    <lineage>
        <taxon>Bacteria</taxon>
        <taxon>Pseudomonadati</taxon>
        <taxon>Myxococcota</taxon>
        <taxon>Myxococcia</taxon>
        <taxon>Myxococcales</taxon>
        <taxon>Cystobacterineae</taxon>
        <taxon>Myxococcaceae</taxon>
        <taxon>Myxococcus</taxon>
    </lineage>
</organism>
<reference key="1">
    <citation type="journal article" date="2006" name="Proc. Natl. Acad. Sci. U.S.A.">
        <title>Evolution of sensory complexity recorded in a myxobacterial genome.</title>
        <authorList>
            <person name="Goldman B.S."/>
            <person name="Nierman W.C."/>
            <person name="Kaiser D."/>
            <person name="Slater S.C."/>
            <person name="Durkin A.S."/>
            <person name="Eisen J.A."/>
            <person name="Ronning C.M."/>
            <person name="Barbazuk W.B."/>
            <person name="Blanchard M."/>
            <person name="Field C."/>
            <person name="Halling C."/>
            <person name="Hinkle G."/>
            <person name="Iartchuk O."/>
            <person name="Kim H.S."/>
            <person name="Mackenzie C."/>
            <person name="Madupu R."/>
            <person name="Miller N."/>
            <person name="Shvartsbeyn A."/>
            <person name="Sullivan S.A."/>
            <person name="Vaudin M."/>
            <person name="Wiegand R."/>
            <person name="Kaplan H.B."/>
        </authorList>
    </citation>
    <scope>NUCLEOTIDE SEQUENCE [LARGE SCALE GENOMIC DNA]</scope>
    <source>
        <strain>DK1622</strain>
    </source>
</reference>
<sequence length="127" mass="14214">MARIAGIDLPPNKRAVISLQYIYGIGNKSAQDIIAAAGIDPTTRTKDLTEEQARKIREIIEASYKVEGDLRREVTMNIKRLMDLGCYRGLRHRKGLPVRGQRTHTNARTRKGPKRGIVRAKPAAPAR</sequence>
<accession>Q1D751</accession>
<comment type="function">
    <text evidence="1">Located at the top of the head of the 30S subunit, it contacts several helices of the 16S rRNA. In the 70S ribosome it contacts the 23S rRNA (bridge B1a) and protein L5 of the 50S subunit (bridge B1b), connecting the 2 subunits; these bridges are implicated in subunit movement. Contacts the tRNAs in the A and P-sites.</text>
</comment>
<comment type="subunit">
    <text evidence="1">Part of the 30S ribosomal subunit. Forms a loose heterodimer with protein S19. Forms two bridges to the 50S subunit in the 70S ribosome.</text>
</comment>
<comment type="similarity">
    <text evidence="1">Belongs to the universal ribosomal protein uS13 family.</text>
</comment>
<dbReference type="EMBL" id="CP000113">
    <property type="protein sequence ID" value="ABF90638.1"/>
    <property type="molecule type" value="Genomic_DNA"/>
</dbReference>
<dbReference type="RefSeq" id="WP_011553358.1">
    <property type="nucleotide sequence ID" value="NC_008095.1"/>
</dbReference>
<dbReference type="SMR" id="Q1D751"/>
<dbReference type="STRING" id="246197.MXAN_3323"/>
<dbReference type="EnsemblBacteria" id="ABF90638">
    <property type="protein sequence ID" value="ABF90638"/>
    <property type="gene ID" value="MXAN_3323"/>
</dbReference>
<dbReference type="GeneID" id="41360676"/>
<dbReference type="KEGG" id="mxa:MXAN_3323"/>
<dbReference type="eggNOG" id="COG0099">
    <property type="taxonomic scope" value="Bacteria"/>
</dbReference>
<dbReference type="HOGENOM" id="CLU_103849_1_2_7"/>
<dbReference type="OrthoDB" id="9803610at2"/>
<dbReference type="Proteomes" id="UP000002402">
    <property type="component" value="Chromosome"/>
</dbReference>
<dbReference type="GO" id="GO:0005829">
    <property type="term" value="C:cytosol"/>
    <property type="evidence" value="ECO:0007669"/>
    <property type="project" value="TreeGrafter"/>
</dbReference>
<dbReference type="GO" id="GO:0015935">
    <property type="term" value="C:small ribosomal subunit"/>
    <property type="evidence" value="ECO:0007669"/>
    <property type="project" value="TreeGrafter"/>
</dbReference>
<dbReference type="GO" id="GO:0019843">
    <property type="term" value="F:rRNA binding"/>
    <property type="evidence" value="ECO:0007669"/>
    <property type="project" value="UniProtKB-UniRule"/>
</dbReference>
<dbReference type="GO" id="GO:0003735">
    <property type="term" value="F:structural constituent of ribosome"/>
    <property type="evidence" value="ECO:0007669"/>
    <property type="project" value="InterPro"/>
</dbReference>
<dbReference type="GO" id="GO:0000049">
    <property type="term" value="F:tRNA binding"/>
    <property type="evidence" value="ECO:0007669"/>
    <property type="project" value="UniProtKB-UniRule"/>
</dbReference>
<dbReference type="GO" id="GO:0006412">
    <property type="term" value="P:translation"/>
    <property type="evidence" value="ECO:0007669"/>
    <property type="project" value="UniProtKB-UniRule"/>
</dbReference>
<dbReference type="FunFam" id="1.10.8.50:FF:000001">
    <property type="entry name" value="30S ribosomal protein S13"/>
    <property type="match status" value="1"/>
</dbReference>
<dbReference type="FunFam" id="4.10.910.10:FF:000001">
    <property type="entry name" value="30S ribosomal protein S13"/>
    <property type="match status" value="1"/>
</dbReference>
<dbReference type="Gene3D" id="1.10.8.50">
    <property type="match status" value="1"/>
</dbReference>
<dbReference type="Gene3D" id="4.10.910.10">
    <property type="entry name" value="30s ribosomal protein s13, domain 2"/>
    <property type="match status" value="1"/>
</dbReference>
<dbReference type="HAMAP" id="MF_01315">
    <property type="entry name" value="Ribosomal_uS13"/>
    <property type="match status" value="1"/>
</dbReference>
<dbReference type="InterPro" id="IPR027437">
    <property type="entry name" value="Rbsml_uS13_C"/>
</dbReference>
<dbReference type="InterPro" id="IPR001892">
    <property type="entry name" value="Ribosomal_uS13"/>
</dbReference>
<dbReference type="InterPro" id="IPR010979">
    <property type="entry name" value="Ribosomal_uS13-like_H2TH"/>
</dbReference>
<dbReference type="InterPro" id="IPR019980">
    <property type="entry name" value="Ribosomal_uS13_bac-type"/>
</dbReference>
<dbReference type="InterPro" id="IPR018269">
    <property type="entry name" value="Ribosomal_uS13_CS"/>
</dbReference>
<dbReference type="NCBIfam" id="TIGR03631">
    <property type="entry name" value="uS13_bact"/>
    <property type="match status" value="1"/>
</dbReference>
<dbReference type="PANTHER" id="PTHR10871">
    <property type="entry name" value="30S RIBOSOMAL PROTEIN S13/40S RIBOSOMAL PROTEIN S18"/>
    <property type="match status" value="1"/>
</dbReference>
<dbReference type="PANTHER" id="PTHR10871:SF1">
    <property type="entry name" value="SMALL RIBOSOMAL SUBUNIT PROTEIN US13M"/>
    <property type="match status" value="1"/>
</dbReference>
<dbReference type="Pfam" id="PF00416">
    <property type="entry name" value="Ribosomal_S13"/>
    <property type="match status" value="1"/>
</dbReference>
<dbReference type="PIRSF" id="PIRSF002134">
    <property type="entry name" value="Ribosomal_S13"/>
    <property type="match status" value="1"/>
</dbReference>
<dbReference type="SUPFAM" id="SSF46946">
    <property type="entry name" value="S13-like H2TH domain"/>
    <property type="match status" value="1"/>
</dbReference>
<dbReference type="PROSITE" id="PS00646">
    <property type="entry name" value="RIBOSOMAL_S13_1"/>
    <property type="match status" value="1"/>
</dbReference>
<dbReference type="PROSITE" id="PS50159">
    <property type="entry name" value="RIBOSOMAL_S13_2"/>
    <property type="match status" value="1"/>
</dbReference>
<proteinExistence type="inferred from homology"/>
<keyword id="KW-1185">Reference proteome</keyword>
<keyword id="KW-0687">Ribonucleoprotein</keyword>
<keyword id="KW-0689">Ribosomal protein</keyword>
<keyword id="KW-0694">RNA-binding</keyword>
<keyword id="KW-0699">rRNA-binding</keyword>
<keyword id="KW-0820">tRNA-binding</keyword>
<protein>
    <recommendedName>
        <fullName evidence="1">Small ribosomal subunit protein uS13</fullName>
    </recommendedName>
    <alternativeName>
        <fullName evidence="3">30S ribosomal protein S13</fullName>
    </alternativeName>
</protein>